<evidence type="ECO:0000255" key="1">
    <source>
        <dbReference type="HAMAP-Rule" id="MF_00220"/>
    </source>
</evidence>
<sequence length="431" mass="46901">MRMIIKNGTVIDGFGSEATADILIDYGIIKAIDKNIQVSDGIVIDATGKYVLPGFVDMHTHLRQPGFEEKETIKTGTEAAATGGYTTVACMPNTNPPIDNEIVVEYVKSIAQREGVVKVLPIGAMTKGMKGEEITEMAKLKKAGVVALSDDGFPIMSAGLMKRIMTYGKMYDLLMITHCEDKALSGEGVMNSGVISTMIGLKGIPREAEEVMLARNIILAKSTGVRLHIAHISTKGSVELIREAKEKGVKITAEVTPHNLTLTDEAVYNYDTNTKAYPPLRTREDIEALIEGLKDGTIDAIATDHAPHTKDDKKVPYDMAAFGISGLETAFSVINTFLVQTGKITIKELVNYMSINPAKILGISSGIKVGSIADIVIVDPYEEYVVDKDKFKSKGKNTPFHGMRLKGVVDCTIVEGEIKYKKDRKTEKVEV</sequence>
<protein>
    <recommendedName>
        <fullName evidence="1">Dihydroorotase</fullName>
        <shortName evidence="1">DHOase</shortName>
        <ecNumber evidence="1">3.5.2.3</ecNumber>
    </recommendedName>
</protein>
<reference key="1">
    <citation type="submission" date="2008-01" db="EMBL/GenBank/DDBJ databases">
        <title>Complete sequence of Thermoanaerobacter sp. X514.</title>
        <authorList>
            <consortium name="US DOE Joint Genome Institute"/>
            <person name="Copeland A."/>
            <person name="Lucas S."/>
            <person name="Lapidus A."/>
            <person name="Barry K."/>
            <person name="Glavina del Rio T."/>
            <person name="Dalin E."/>
            <person name="Tice H."/>
            <person name="Pitluck S."/>
            <person name="Bruce D."/>
            <person name="Goodwin L."/>
            <person name="Saunders E."/>
            <person name="Brettin T."/>
            <person name="Detter J.C."/>
            <person name="Han C."/>
            <person name="Schmutz J."/>
            <person name="Larimer F."/>
            <person name="Land M."/>
            <person name="Hauser L."/>
            <person name="Kyrpides N."/>
            <person name="Kim E."/>
            <person name="Hemme C."/>
            <person name="Fields M.W."/>
            <person name="He Z."/>
            <person name="Zhou J."/>
            <person name="Richardson P."/>
        </authorList>
    </citation>
    <scope>NUCLEOTIDE SEQUENCE [LARGE SCALE GENOMIC DNA]</scope>
    <source>
        <strain>X514</strain>
    </source>
</reference>
<name>PYRC_THEPX</name>
<dbReference type="EC" id="3.5.2.3" evidence="1"/>
<dbReference type="EMBL" id="CP000923">
    <property type="protein sequence ID" value="ABY93099.1"/>
    <property type="molecule type" value="Genomic_DNA"/>
</dbReference>
<dbReference type="RefSeq" id="WP_003868402.1">
    <property type="nucleotide sequence ID" value="NC_010320.1"/>
</dbReference>
<dbReference type="SMR" id="B0K2E8"/>
<dbReference type="KEGG" id="tex:Teth514_1817"/>
<dbReference type="HOGENOM" id="CLU_015572_1_0_9"/>
<dbReference type="UniPathway" id="UPA00070">
    <property type="reaction ID" value="UER00117"/>
</dbReference>
<dbReference type="Proteomes" id="UP000002155">
    <property type="component" value="Chromosome"/>
</dbReference>
<dbReference type="GO" id="GO:0005737">
    <property type="term" value="C:cytoplasm"/>
    <property type="evidence" value="ECO:0007669"/>
    <property type="project" value="TreeGrafter"/>
</dbReference>
<dbReference type="GO" id="GO:0004038">
    <property type="term" value="F:allantoinase activity"/>
    <property type="evidence" value="ECO:0007669"/>
    <property type="project" value="TreeGrafter"/>
</dbReference>
<dbReference type="GO" id="GO:0004151">
    <property type="term" value="F:dihydroorotase activity"/>
    <property type="evidence" value="ECO:0007669"/>
    <property type="project" value="UniProtKB-UniRule"/>
</dbReference>
<dbReference type="GO" id="GO:0008270">
    <property type="term" value="F:zinc ion binding"/>
    <property type="evidence" value="ECO:0007669"/>
    <property type="project" value="UniProtKB-UniRule"/>
</dbReference>
<dbReference type="GO" id="GO:0044205">
    <property type="term" value="P:'de novo' UMP biosynthetic process"/>
    <property type="evidence" value="ECO:0007669"/>
    <property type="project" value="UniProtKB-UniRule"/>
</dbReference>
<dbReference type="GO" id="GO:0006145">
    <property type="term" value="P:purine nucleobase catabolic process"/>
    <property type="evidence" value="ECO:0007669"/>
    <property type="project" value="TreeGrafter"/>
</dbReference>
<dbReference type="CDD" id="cd01317">
    <property type="entry name" value="DHOase_IIa"/>
    <property type="match status" value="1"/>
</dbReference>
<dbReference type="Gene3D" id="3.20.20.140">
    <property type="entry name" value="Metal-dependent hydrolases"/>
    <property type="match status" value="1"/>
</dbReference>
<dbReference type="Gene3D" id="2.30.40.10">
    <property type="entry name" value="Urease, subunit C, domain 1"/>
    <property type="match status" value="1"/>
</dbReference>
<dbReference type="HAMAP" id="MF_00220_B">
    <property type="entry name" value="PyrC_classI_B"/>
    <property type="match status" value="1"/>
</dbReference>
<dbReference type="InterPro" id="IPR006680">
    <property type="entry name" value="Amidohydro-rel"/>
</dbReference>
<dbReference type="InterPro" id="IPR004722">
    <property type="entry name" value="DHOase"/>
</dbReference>
<dbReference type="InterPro" id="IPR050138">
    <property type="entry name" value="DHOase/Allantoinase_Hydrolase"/>
</dbReference>
<dbReference type="InterPro" id="IPR002195">
    <property type="entry name" value="Dihydroorotase_CS"/>
</dbReference>
<dbReference type="InterPro" id="IPR011059">
    <property type="entry name" value="Metal-dep_hydrolase_composite"/>
</dbReference>
<dbReference type="InterPro" id="IPR032466">
    <property type="entry name" value="Metal_Hydrolase"/>
</dbReference>
<dbReference type="NCBIfam" id="NF006843">
    <property type="entry name" value="PRK09357.2-4"/>
    <property type="match status" value="1"/>
</dbReference>
<dbReference type="NCBIfam" id="TIGR00857">
    <property type="entry name" value="pyrC_multi"/>
    <property type="match status" value="1"/>
</dbReference>
<dbReference type="PANTHER" id="PTHR43668">
    <property type="entry name" value="ALLANTOINASE"/>
    <property type="match status" value="1"/>
</dbReference>
<dbReference type="PANTHER" id="PTHR43668:SF2">
    <property type="entry name" value="ALLANTOINASE"/>
    <property type="match status" value="1"/>
</dbReference>
<dbReference type="Pfam" id="PF01979">
    <property type="entry name" value="Amidohydro_1"/>
    <property type="match status" value="1"/>
</dbReference>
<dbReference type="SUPFAM" id="SSF51338">
    <property type="entry name" value="Composite domain of metallo-dependent hydrolases"/>
    <property type="match status" value="1"/>
</dbReference>
<dbReference type="SUPFAM" id="SSF51556">
    <property type="entry name" value="Metallo-dependent hydrolases"/>
    <property type="match status" value="1"/>
</dbReference>
<dbReference type="PROSITE" id="PS00483">
    <property type="entry name" value="DIHYDROOROTASE_2"/>
    <property type="match status" value="1"/>
</dbReference>
<proteinExistence type="inferred from homology"/>
<accession>B0K2E8</accession>
<gene>
    <name evidence="1" type="primary">pyrC</name>
    <name type="ordered locus">Teth514_1817</name>
</gene>
<keyword id="KW-0378">Hydrolase</keyword>
<keyword id="KW-0479">Metal-binding</keyword>
<keyword id="KW-0665">Pyrimidine biosynthesis</keyword>
<keyword id="KW-0862">Zinc</keyword>
<organism>
    <name type="scientific">Thermoanaerobacter sp. (strain X514)</name>
    <dbReference type="NCBI Taxonomy" id="399726"/>
    <lineage>
        <taxon>Bacteria</taxon>
        <taxon>Bacillati</taxon>
        <taxon>Bacillota</taxon>
        <taxon>Clostridia</taxon>
        <taxon>Thermoanaerobacterales</taxon>
        <taxon>Thermoanaerobacteraceae</taxon>
        <taxon>Thermoanaerobacter</taxon>
    </lineage>
</organism>
<feature type="chain" id="PRO_1000100080" description="Dihydroorotase">
    <location>
        <begin position="1"/>
        <end position="431"/>
    </location>
</feature>
<feature type="active site" evidence="1">
    <location>
        <position position="304"/>
    </location>
</feature>
<feature type="binding site" evidence="1">
    <location>
        <position position="59"/>
    </location>
    <ligand>
        <name>Zn(2+)</name>
        <dbReference type="ChEBI" id="CHEBI:29105"/>
        <label>1</label>
    </ligand>
</feature>
<feature type="binding site" evidence="1">
    <location>
        <begin position="61"/>
        <end position="63"/>
    </location>
    <ligand>
        <name>substrate</name>
    </ligand>
</feature>
<feature type="binding site" evidence="1">
    <location>
        <position position="61"/>
    </location>
    <ligand>
        <name>Zn(2+)</name>
        <dbReference type="ChEBI" id="CHEBI:29105"/>
        <label>1</label>
    </ligand>
</feature>
<feature type="binding site" evidence="1">
    <location>
        <position position="93"/>
    </location>
    <ligand>
        <name>substrate</name>
    </ligand>
</feature>
<feature type="binding site" evidence="1">
    <location>
        <position position="151"/>
    </location>
    <ligand>
        <name>Zn(2+)</name>
        <dbReference type="ChEBI" id="CHEBI:29105"/>
        <label>1</label>
    </ligand>
</feature>
<feature type="binding site" evidence="1">
    <location>
        <position position="151"/>
    </location>
    <ligand>
        <name>Zn(2+)</name>
        <dbReference type="ChEBI" id="CHEBI:29105"/>
        <label>2</label>
    </ligand>
</feature>
<feature type="binding site" evidence="1">
    <location>
        <position position="178"/>
    </location>
    <ligand>
        <name>Zn(2+)</name>
        <dbReference type="ChEBI" id="CHEBI:29105"/>
        <label>2</label>
    </ligand>
</feature>
<feature type="binding site" evidence="1">
    <location>
        <position position="231"/>
    </location>
    <ligand>
        <name>Zn(2+)</name>
        <dbReference type="ChEBI" id="CHEBI:29105"/>
        <label>2</label>
    </ligand>
</feature>
<feature type="binding site" evidence="1">
    <location>
        <position position="304"/>
    </location>
    <ligand>
        <name>Zn(2+)</name>
        <dbReference type="ChEBI" id="CHEBI:29105"/>
        <label>1</label>
    </ligand>
</feature>
<feature type="binding site" evidence="1">
    <location>
        <position position="308"/>
    </location>
    <ligand>
        <name>substrate</name>
    </ligand>
</feature>
<feature type="binding site" evidence="1">
    <location>
        <begin position="322"/>
        <end position="323"/>
    </location>
    <ligand>
        <name>substrate</name>
    </ligand>
</feature>
<comment type="function">
    <text evidence="1">Catalyzes the reversible cyclization of carbamoyl aspartate to dihydroorotate.</text>
</comment>
<comment type="catalytic activity">
    <reaction evidence="1">
        <text>(S)-dihydroorotate + H2O = N-carbamoyl-L-aspartate + H(+)</text>
        <dbReference type="Rhea" id="RHEA:24296"/>
        <dbReference type="ChEBI" id="CHEBI:15377"/>
        <dbReference type="ChEBI" id="CHEBI:15378"/>
        <dbReference type="ChEBI" id="CHEBI:30864"/>
        <dbReference type="ChEBI" id="CHEBI:32814"/>
        <dbReference type="EC" id="3.5.2.3"/>
    </reaction>
</comment>
<comment type="cofactor">
    <cofactor evidence="1">
        <name>Zn(2+)</name>
        <dbReference type="ChEBI" id="CHEBI:29105"/>
    </cofactor>
    <text evidence="1">Binds 2 Zn(2+) ions per subunit.</text>
</comment>
<comment type="pathway">
    <text evidence="1">Pyrimidine metabolism; UMP biosynthesis via de novo pathway; (S)-dihydroorotate from bicarbonate: step 3/3.</text>
</comment>
<comment type="similarity">
    <text evidence="1">Belongs to the metallo-dependent hydrolases superfamily. DHOase family. Class I DHOase subfamily.</text>
</comment>